<name>CW15B_XENLA</name>
<sequence length="230" mass="26654">MTTAARPTFEPARGGRGKGESDLSQLSKQYSSRDLPSHTKIKYRQTTQDAPEEVRSRDFRRELEERERVAVRDKNRDRPTREHTSSVSKKPRLDQIPAANLDADDPLTDEDADEDSDEDSDDDTAALLAELEKIKKERAEEQVRKELEQKAEEERIRMENILSGNPLLNLTGPAAQSQASFKVKRRWDDDVVFKNCAKGVDEMKKRQDKRFVNDTLRSEFHKKFMEKYVK</sequence>
<comment type="function">
    <text evidence="1">Involved in pre-mRNA splicing as component of the spliceosome.</text>
</comment>
<comment type="subunit">
    <text evidence="1">Identified in the spliceosome C complex. Component of the minor spliceosome, which splices U12-type introns (By similarity).</text>
</comment>
<comment type="subcellular location">
    <subcellularLocation>
        <location evidence="1">Nucleus</location>
    </subcellularLocation>
</comment>
<comment type="similarity">
    <text evidence="4">Belongs to the CWC15 family.</text>
</comment>
<protein>
    <recommendedName>
        <fullName>Protein CWC15 homolog B</fullName>
    </recommendedName>
</protein>
<keyword id="KW-0175">Coiled coil</keyword>
<keyword id="KW-0507">mRNA processing</keyword>
<keyword id="KW-0508">mRNA splicing</keyword>
<keyword id="KW-0539">Nucleus</keyword>
<keyword id="KW-1185">Reference proteome</keyword>
<keyword id="KW-0747">Spliceosome</keyword>
<feature type="chain" id="PRO_0000291549" description="Protein CWC15 homolog B">
    <location>
        <begin position="1"/>
        <end position="230"/>
    </location>
</feature>
<feature type="region of interest" description="Disordered" evidence="3">
    <location>
        <begin position="1"/>
        <end position="126"/>
    </location>
</feature>
<feature type="coiled-coil region" evidence="2">
    <location>
        <begin position="121"/>
        <end position="165"/>
    </location>
</feature>
<feature type="compositionally biased region" description="Polar residues" evidence="3">
    <location>
        <begin position="22"/>
        <end position="34"/>
    </location>
</feature>
<feature type="compositionally biased region" description="Basic and acidic residues" evidence="3">
    <location>
        <begin position="52"/>
        <end position="84"/>
    </location>
</feature>
<feature type="compositionally biased region" description="Acidic residues" evidence="3">
    <location>
        <begin position="102"/>
        <end position="124"/>
    </location>
</feature>
<evidence type="ECO:0000250" key="1">
    <source>
        <dbReference type="UniProtKB" id="Q9P013"/>
    </source>
</evidence>
<evidence type="ECO:0000255" key="2"/>
<evidence type="ECO:0000256" key="3">
    <source>
        <dbReference type="SAM" id="MobiDB-lite"/>
    </source>
</evidence>
<evidence type="ECO:0000305" key="4"/>
<reference key="1">
    <citation type="submission" date="2004-06" db="EMBL/GenBank/DDBJ databases">
        <authorList>
            <consortium name="NIH - Xenopus Gene Collection (XGC) project"/>
        </authorList>
    </citation>
    <scope>NUCLEOTIDE SEQUENCE [LARGE SCALE MRNA]</scope>
    <source>
        <tissue>Kidney</tissue>
    </source>
</reference>
<gene>
    <name type="primary">cwc15-b</name>
</gene>
<organism>
    <name type="scientific">Xenopus laevis</name>
    <name type="common">African clawed frog</name>
    <dbReference type="NCBI Taxonomy" id="8355"/>
    <lineage>
        <taxon>Eukaryota</taxon>
        <taxon>Metazoa</taxon>
        <taxon>Chordata</taxon>
        <taxon>Craniata</taxon>
        <taxon>Vertebrata</taxon>
        <taxon>Euteleostomi</taxon>
        <taxon>Amphibia</taxon>
        <taxon>Batrachia</taxon>
        <taxon>Anura</taxon>
        <taxon>Pipoidea</taxon>
        <taxon>Pipidae</taxon>
        <taxon>Xenopodinae</taxon>
        <taxon>Xenopus</taxon>
        <taxon>Xenopus</taxon>
    </lineage>
</organism>
<proteinExistence type="evidence at transcript level"/>
<accession>Q6DKE6</accession>
<dbReference type="EMBL" id="BC074156">
    <property type="protein sequence ID" value="AAH74156.1"/>
    <property type="molecule type" value="mRNA"/>
</dbReference>
<dbReference type="RefSeq" id="NP_001086072.1">
    <property type="nucleotide sequence ID" value="NM_001092603.1"/>
</dbReference>
<dbReference type="SMR" id="Q6DKE6"/>
<dbReference type="GeneID" id="444501"/>
<dbReference type="KEGG" id="xla:444501"/>
<dbReference type="AGR" id="Xenbase:XB-GENE-6254901"/>
<dbReference type="CTD" id="444501"/>
<dbReference type="Xenbase" id="XB-GENE-6254901">
    <property type="gene designation" value="cwc15.L"/>
</dbReference>
<dbReference type="OMA" id="YRYARIS"/>
<dbReference type="OrthoDB" id="30179at2759"/>
<dbReference type="Proteomes" id="UP000186698">
    <property type="component" value="Chromosome 2L"/>
</dbReference>
<dbReference type="Bgee" id="444501">
    <property type="expression patterns" value="Expressed in testis and 19 other cell types or tissues"/>
</dbReference>
<dbReference type="GO" id="GO:0071013">
    <property type="term" value="C:catalytic step 2 spliceosome"/>
    <property type="evidence" value="ECO:0000318"/>
    <property type="project" value="GO_Central"/>
</dbReference>
<dbReference type="GO" id="GO:0005634">
    <property type="term" value="C:nucleus"/>
    <property type="evidence" value="ECO:0000250"/>
    <property type="project" value="UniProtKB"/>
</dbReference>
<dbReference type="GO" id="GO:0071007">
    <property type="term" value="C:U2-type catalytic step 2 spliceosome"/>
    <property type="evidence" value="ECO:0000250"/>
    <property type="project" value="UniProtKB"/>
</dbReference>
<dbReference type="GO" id="GO:0003723">
    <property type="term" value="F:RNA binding"/>
    <property type="evidence" value="ECO:0000250"/>
    <property type="project" value="UniProtKB"/>
</dbReference>
<dbReference type="GO" id="GO:0045292">
    <property type="term" value="P:mRNA cis splicing, via spliceosome"/>
    <property type="evidence" value="ECO:0000318"/>
    <property type="project" value="GO_Central"/>
</dbReference>
<dbReference type="GO" id="GO:0000398">
    <property type="term" value="P:mRNA splicing, via spliceosome"/>
    <property type="evidence" value="ECO:0000250"/>
    <property type="project" value="UniProtKB"/>
</dbReference>
<dbReference type="InterPro" id="IPR006973">
    <property type="entry name" value="Cwf_Cwc_15"/>
</dbReference>
<dbReference type="PANTHER" id="PTHR12718">
    <property type="entry name" value="CELL CYCLE CONTROL PROTEIN CWF15"/>
    <property type="match status" value="1"/>
</dbReference>
<dbReference type="PANTHER" id="PTHR12718:SF2">
    <property type="entry name" value="SPLICEOSOME-ASSOCIATED PROTEIN CWC15 HOMOLOG"/>
    <property type="match status" value="1"/>
</dbReference>
<dbReference type="Pfam" id="PF04889">
    <property type="entry name" value="Cwf_Cwc_15"/>
    <property type="match status" value="1"/>
</dbReference>